<dbReference type="EMBL" id="X60089">
    <property type="protein sequence ID" value="CAA42686.1"/>
    <property type="molecule type" value="Genomic_RNA"/>
</dbReference>
<dbReference type="PIR" id="S24284">
    <property type="entry name" value="S24284"/>
</dbReference>
<dbReference type="SMR" id="P27655"/>
<dbReference type="GO" id="GO:0044173">
    <property type="term" value="C:host cell endoplasmic reticulum-Golgi intermediate compartment membrane"/>
    <property type="evidence" value="ECO:0007669"/>
    <property type="project" value="UniProtKB-SubCell"/>
</dbReference>
<dbReference type="GO" id="GO:0016020">
    <property type="term" value="C:membrane"/>
    <property type="evidence" value="ECO:0007669"/>
    <property type="project" value="UniProtKB-UniRule"/>
</dbReference>
<dbReference type="GO" id="GO:0019031">
    <property type="term" value="C:viral envelope"/>
    <property type="evidence" value="ECO:0007669"/>
    <property type="project" value="UniProtKB-UniRule"/>
</dbReference>
<dbReference type="GO" id="GO:0055036">
    <property type="term" value="C:virion membrane"/>
    <property type="evidence" value="ECO:0007669"/>
    <property type="project" value="UniProtKB-SubCell"/>
</dbReference>
<dbReference type="GO" id="GO:0075509">
    <property type="term" value="P:endocytosis involved in viral entry into host cell"/>
    <property type="evidence" value="ECO:0007669"/>
    <property type="project" value="UniProtKB-UniRule"/>
</dbReference>
<dbReference type="GO" id="GO:0039654">
    <property type="term" value="P:fusion of virus membrane with host endosome membrane"/>
    <property type="evidence" value="ECO:0007669"/>
    <property type="project" value="UniProtKB-UniRule"/>
</dbReference>
<dbReference type="GO" id="GO:0019064">
    <property type="term" value="P:fusion of virus membrane with host plasma membrane"/>
    <property type="evidence" value="ECO:0007669"/>
    <property type="project" value="UniProtKB-UniRule"/>
</dbReference>
<dbReference type="GO" id="GO:0046813">
    <property type="term" value="P:receptor-mediated virion attachment to host cell"/>
    <property type="evidence" value="ECO:0007669"/>
    <property type="project" value="UniProtKB-UniRule"/>
</dbReference>
<dbReference type="CDD" id="cd22377">
    <property type="entry name" value="TGEV-like_Spike_SD1-2_S1-S2_S2"/>
    <property type="match status" value="1"/>
</dbReference>
<dbReference type="Gene3D" id="1.20.5.300">
    <property type="match status" value="2"/>
</dbReference>
<dbReference type="Gene3D" id="2.60.40.3130">
    <property type="match status" value="1"/>
</dbReference>
<dbReference type="HAMAP" id="MF_04200">
    <property type="entry name" value="ALPHA_CORONA_SPIKE"/>
    <property type="match status" value="1"/>
</dbReference>
<dbReference type="InterPro" id="IPR042552">
    <property type="entry name" value="ALPHA_CORONA_SPIKE"/>
</dbReference>
<dbReference type="InterPro" id="IPR043607">
    <property type="entry name" value="CoV_S1_C"/>
</dbReference>
<dbReference type="InterPro" id="IPR043473">
    <property type="entry name" value="S2_sf_CoV"/>
</dbReference>
<dbReference type="InterPro" id="IPR002551">
    <property type="entry name" value="Spike_S1_CoV"/>
</dbReference>
<dbReference type="InterPro" id="IPR002552">
    <property type="entry name" value="Spike_S2_CoV"/>
</dbReference>
<dbReference type="InterPro" id="IPR043614">
    <property type="entry name" value="Spike_S2_CoV_C"/>
</dbReference>
<dbReference type="InterPro" id="IPR044873">
    <property type="entry name" value="Spike_S2_CoV_HR1"/>
</dbReference>
<dbReference type="InterPro" id="IPR044874">
    <property type="entry name" value="Spike_S2_CoV_HR2"/>
</dbReference>
<dbReference type="Pfam" id="PF01600">
    <property type="entry name" value="CoV_S1"/>
    <property type="match status" value="1"/>
</dbReference>
<dbReference type="Pfam" id="PF19209">
    <property type="entry name" value="CoV_S1_C"/>
    <property type="match status" value="1"/>
</dbReference>
<dbReference type="Pfam" id="PF01601">
    <property type="entry name" value="CoV_S2"/>
    <property type="match status" value="1"/>
</dbReference>
<dbReference type="Pfam" id="PF19214">
    <property type="entry name" value="CoV_S2_C"/>
    <property type="match status" value="1"/>
</dbReference>
<dbReference type="SUPFAM" id="SSF111474">
    <property type="entry name" value="Coronavirus S2 glycoprotein"/>
    <property type="match status" value="2"/>
</dbReference>
<dbReference type="PROSITE" id="PS51923">
    <property type="entry name" value="COV_S2_HR1"/>
    <property type="match status" value="1"/>
</dbReference>
<dbReference type="PROSITE" id="PS51924">
    <property type="entry name" value="COV_S2_HR2"/>
    <property type="match status" value="1"/>
</dbReference>
<organismHost>
    <name type="scientific">Sus scrofa</name>
    <name type="common">Pig</name>
    <dbReference type="NCBI Taxonomy" id="9823"/>
</organismHost>
<accession>P27655</accession>
<proteinExistence type="inferred from homology"/>
<protein>
    <recommendedName>
        <fullName evidence="1">Spike glycoprotein</fullName>
        <shortName evidence="1">S glycoprotein</shortName>
    </recommendedName>
    <alternativeName>
        <fullName evidence="1">E2</fullName>
    </alternativeName>
    <alternativeName>
        <fullName evidence="1">Peplomer protein</fullName>
    </alternativeName>
</protein>
<keyword id="KW-0175">Coiled coil</keyword>
<keyword id="KW-0325">Glycoprotein</keyword>
<keyword id="KW-1043">Host membrane</keyword>
<keyword id="KW-0945">Host-virus interaction</keyword>
<keyword id="KW-0472">Membrane</keyword>
<keyword id="KW-0732">Signal</keyword>
<keyword id="KW-0812">Transmembrane</keyword>
<keyword id="KW-1133">Transmembrane helix</keyword>
<keyword id="KW-1161">Viral attachment to host cell</keyword>
<keyword id="KW-0261">Viral envelope protein</keyword>
<keyword id="KW-0946">Virion</keyword>
<keyword id="KW-0843">Virulence</keyword>
<keyword id="KW-1160">Virus entry into host cell</keyword>
<sequence>MKKLFVVLVVMPLIYGDKFPTSVVSNCTDQCASYVANVFTTQPGGFIPSDFSFNNWFILTNSSTLVSGKLVTKQPLLVNCLWPVPSFEEAASTFCFEGADFDQCNGAVLNNTVDVIRFNLNFTTNVQSGKGATVFSLNTTGGVTLEISCYNDTVSDSSFSSYGEIPFGVTNGPRYCYVLYNGTALKYLGTLPPSVKEIAISKWGHFYINGYNFFSTFPIDCISFNLTTGDSDVFWTIAYTSYTEALVQVENTAITNVTYCNSYVNNIKCSQLTANLNNGFYPVSSSEVGSVNKSVVLLPSFLTHTIVNITIGLGMKRSGYGQPIASTLSNITLPMQDNNTDVYCVRSDQFSVYVHSTCKSALWDNVFKRNCTDVLDATAVIKTGTCPFSFDKLNNYLTFNKFCLSLSPVGANCKFDVAARTRTNDQFVRSLYVIYEEGDSIVGVPSDNSGLHDLSVLHLDSCTDYNIYGRTGVGIIRQTNRTLLSGLYYTSLSGDLLGFKNVSDGVIYSVTPCDVSAQAAIIDGAIVGAITSINSELLALTHWTITPNFYYYSIYNYTNDKTRGTPIGSNDVDCEPVITYSNIGVCKNGALVFINVTHSDGDVQPISTGNVTIPTNFTISVQVEYIQVYTTPVSIDCSRYVCNGNPRCNKLLTQYVSACQTIEQALAMGARLENMEVDSMLFVSENALKLASVEAFNSSETLDPIYKEWPNIGGFWLEGLKYILPSDNSKRKYRSAIEDLLFSKVVTSGLGTVDEDYKRCTGGYDIADLVCAQYYNGIMVLPGVANADKMTMYTASLAGGITLGALGGGAVAIPFAVAVQARLNYVALQTDVLNKNQQILASAFNQAIGNITQSFGKVNDAIHQTSRGLTTVAKALAKVQDVVNTQGQALRHLTVQLQNNFQAISSSISDIYNRLDELSADAQVDRLITGRLTALNAFVSQTLTRQAEVRASRQLAKDKVNECVKSQSHRFGFCGNGTHLFSLANAAPNGMIFFHTVLLPTAYETVTAWSGICALDGDRTFGLVVKDVQLTLFRNLDDNFYLTPRTMYQPRVATSSDFVQIEGCDVLFVNTTVSDLPSIIPDYIDINQTVQDILENFRPNWTVPELTMDVFNATYLNLTGEIDDLEFRSEKLHNTTVELAILIDNINNTLVNLEWLNRIETYVKWPWYVWLLIGLVVIFCIPLLLFCCCSTGCCGCIGCLGSCCHSIFSRRQFENYEPIEKVHVH</sequence>
<organism>
    <name type="scientific">Porcine respiratory coronavirus (strain 86/137004 / isolate British)</name>
    <name type="common">PRCoV</name>
    <name type="synonym">PRCV</name>
    <dbReference type="NCBI Taxonomy" id="33736"/>
    <lineage>
        <taxon>Viruses</taxon>
        <taxon>Riboviria</taxon>
        <taxon>Orthornavirae</taxon>
        <taxon>Pisuviricota</taxon>
        <taxon>Pisoniviricetes</taxon>
        <taxon>Nidovirales</taxon>
        <taxon>Cornidovirineae</taxon>
        <taxon>Coronaviridae</taxon>
        <taxon>Orthocoronavirinae</taxon>
        <taxon>Alphacoronavirus</taxon>
        <taxon>Tegacovirus</taxon>
        <taxon>Alphacoronavirus 1</taxon>
    </lineage>
</organism>
<comment type="function">
    <text evidence="1">S1 region attaches the virion to the cell membrane by interacting with host ANPEP/aminopeptidase N, initiating the infection. Binding to the receptor probably induces conformational changes in the S glycoprotein unmasking the fusion peptide of S2 region and activating membranes fusion. S2 region belongs to the class I viral fusion protein. Under the current model, the protein has at least 3 conformational states: pre-fusion native state, pre-hairpin intermediate state, and post-fusion hairpin state. During viral and target cell membrane fusion, the coiled coil regions (heptad repeats) regions assume a trimer-of-hairpins structure, positioning the fusion peptide in close proximity to the C-terminal region of the ectodomain. The formation of this structure appears to drive apposition and subsequent fusion of viral and target cell membranes.</text>
</comment>
<comment type="subunit">
    <text evidence="1">Homotrimer. During virus morphogenesis, found in a complex with M and HE proteins. Interacts with host ANPEP.</text>
</comment>
<comment type="subcellular location">
    <subcellularLocation>
        <location evidence="1">Virion membrane</location>
        <topology evidence="1">Single-pass type I membrane protein</topology>
    </subcellularLocation>
    <subcellularLocation>
        <location evidence="1">Host endoplasmic reticulum-Golgi intermediate compartment membrane</location>
        <topology evidence="1">Single-pass type I membrane protein</topology>
    </subcellularLocation>
    <text evidence="1">Accumulates in the endoplasmic reticulum-Golgi intermediate compartment, where it participates in virus particle assembly.</text>
</comment>
<comment type="domain">
    <text evidence="1">The KxHxx motif seems to function as an ER retrieval signal.</text>
</comment>
<comment type="similarity">
    <text evidence="1">Belongs to the alphacoronaviruses spike protein family.</text>
</comment>
<comment type="caution">
    <text evidence="1">In contrast to beta- and gammacoronaviruses, S glycoprotein is not cleaved into S1 and S2.</text>
</comment>
<gene>
    <name evidence="1" type="primary">S</name>
</gene>
<reference key="1">
    <citation type="journal article" date="1991" name="Virus Res.">
        <title>The cloning and sequencing of the virion protein genes from a British isolate of porcine respiratory coronavirus: comparison with transmissible gastroenteritis virus genes.</title>
        <authorList>
            <person name="Britton P."/>
            <person name="Mawditt K.L."/>
            <person name="Page K.W."/>
        </authorList>
    </citation>
    <scope>NUCLEOTIDE SEQUENCE [GENOMIC RNA]</scope>
</reference>
<name>SPIKE_CVPR8</name>
<feature type="signal peptide" evidence="1">
    <location>
        <begin position="1"/>
        <end position="12"/>
    </location>
</feature>
<feature type="chain" id="PRO_0000037227" description="Spike glycoprotein" evidence="1">
    <location>
        <begin position="13"/>
        <end position="1225"/>
    </location>
</feature>
<feature type="topological domain" description="Virion surface" evidence="1">
    <location>
        <begin position="13"/>
        <end position="1166"/>
    </location>
</feature>
<feature type="transmembrane region" description="Helical" evidence="1">
    <location>
        <begin position="1167"/>
        <end position="1186"/>
    </location>
</feature>
<feature type="topological domain" description="Intravirion" evidence="1">
    <location>
        <begin position="1187"/>
        <end position="1225"/>
    </location>
</feature>
<feature type="region of interest" description="S1" evidence="1">
    <location>
        <begin position="13"/>
        <end position="552"/>
    </location>
</feature>
<feature type="region of interest" description="S1">
    <location>
        <begin position="17"/>
        <end position="552"/>
    </location>
</feature>
<feature type="region of interest" description="Interaction with host ANPEP" evidence="1">
    <location>
        <begin position="433"/>
        <end position="577"/>
    </location>
</feature>
<feature type="region of interest" description="S2" evidence="1">
    <location>
        <begin position="553"/>
        <end position="1225"/>
    </location>
</feature>
<feature type="region of interest" description="Fusion peptide" evidence="1">
    <location>
        <begin position="798"/>
        <end position="819"/>
    </location>
</feature>
<feature type="region of interest" description="Heptad repeat 1 (HR1)" evidence="2">
    <location>
        <begin position="813"/>
        <end position="932"/>
    </location>
</feature>
<feature type="region of interest" description="Heptad repeat 2 (HR2)" evidence="3">
    <location>
        <begin position="1081"/>
        <end position="1178"/>
    </location>
</feature>
<feature type="coiled-coil region" evidence="1">
    <location>
        <begin position="880"/>
        <end position="924"/>
    </location>
</feature>
<feature type="coiled-coil region" evidence="1">
    <location>
        <begin position="1114"/>
        <end position="1156"/>
    </location>
</feature>
<feature type="short sequence motif" description="KxHxx" evidence="1">
    <location>
        <begin position="1221"/>
        <end position="1225"/>
    </location>
</feature>
<evidence type="ECO:0000255" key="1">
    <source>
        <dbReference type="HAMAP-Rule" id="MF_04200"/>
    </source>
</evidence>
<evidence type="ECO:0000255" key="2">
    <source>
        <dbReference type="PROSITE-ProRule" id="PRU01271"/>
    </source>
</evidence>
<evidence type="ECO:0000255" key="3">
    <source>
        <dbReference type="PROSITE-ProRule" id="PRU01272"/>
    </source>
</evidence>